<feature type="chain" id="PRO_0000165925" description="Dihydropyrimidinase-related protein 5">
    <location>
        <begin position="1"/>
        <end position="564"/>
    </location>
</feature>
<feature type="modified residue" description="Phosphothreonine" evidence="6">
    <location>
        <position position="509"/>
    </location>
</feature>
<feature type="modified residue" description="Phosphothreonine" evidence="6">
    <location>
        <position position="514"/>
    </location>
</feature>
<feature type="modified residue" description="Phosphoserine" evidence="6">
    <location>
        <position position="532"/>
    </location>
</feature>
<feature type="modified residue" description="Phosphoserine" evidence="6">
    <location>
        <position position="538"/>
    </location>
</feature>
<feature type="modified residue" description="Omega-N-methylarginine" evidence="7">
    <location>
        <position position="559"/>
    </location>
</feature>
<evidence type="ECO:0000250" key="1"/>
<evidence type="ECO:0000250" key="2">
    <source>
        <dbReference type="UniProtKB" id="Q9BPU6"/>
    </source>
</evidence>
<evidence type="ECO:0000269" key="3">
    <source>
    </source>
</evidence>
<evidence type="ECO:0000269" key="4">
    <source>
    </source>
</evidence>
<evidence type="ECO:0000305" key="5"/>
<evidence type="ECO:0007744" key="6">
    <source>
    </source>
</evidence>
<evidence type="ECO:0007744" key="7">
    <source>
    </source>
</evidence>
<organism>
    <name type="scientific">Mus musculus</name>
    <name type="common">Mouse</name>
    <dbReference type="NCBI Taxonomy" id="10090"/>
    <lineage>
        <taxon>Eukaryota</taxon>
        <taxon>Metazoa</taxon>
        <taxon>Chordata</taxon>
        <taxon>Craniata</taxon>
        <taxon>Vertebrata</taxon>
        <taxon>Euteleostomi</taxon>
        <taxon>Mammalia</taxon>
        <taxon>Eutheria</taxon>
        <taxon>Euarchontoglires</taxon>
        <taxon>Glires</taxon>
        <taxon>Rodentia</taxon>
        <taxon>Myomorpha</taxon>
        <taxon>Muroidea</taxon>
        <taxon>Muridae</taxon>
        <taxon>Murinae</taxon>
        <taxon>Mus</taxon>
        <taxon>Mus</taxon>
    </lineage>
</organism>
<protein>
    <recommendedName>
        <fullName>Dihydropyrimidinase-related protein 5</fullName>
        <shortName>DRP-5</shortName>
    </recommendedName>
    <alternativeName>
        <fullName>Collapsin response mediator protein 5</fullName>
        <shortName>CRMP-5</shortName>
    </alternativeName>
</protein>
<comment type="function">
    <text evidence="2">Involved in the negative regulation of dendrite outgrowth.</text>
</comment>
<comment type="subunit">
    <text evidence="2 3 4">Homotetramer, and heterotetramer with other DPYS-like proteins. Interacts with DPYSL2, DPYSL3 and DPYSL4. Interacts with SEPTIN4 isoform 4. Interacts with MAP2 and TUBB3 (By similarity).</text>
</comment>
<comment type="subcellular location">
    <subcellularLocation>
        <location evidence="1">Cytoplasm</location>
    </subcellularLocation>
    <text evidence="4">Translocates into the mitochondria upon interaction with SEPTIN4 isoform 4.</text>
</comment>
<comment type="tissue specificity">
    <text evidence="3">Detected in brain.</text>
</comment>
<comment type="developmental stage">
    <text evidence="3">Detected in whole embryos after 11 days of development. Detected in embryonic head. Highly expressed in newborns and up to 7 days after birth. Expression is decreased after 14 days.</text>
</comment>
<comment type="similarity">
    <text evidence="5">Belongs to the metallo-dependent hydrolases superfamily. Hydantoinase/dihydropyrimidinase family.</text>
</comment>
<comment type="caution">
    <text evidence="5">Lacks most of the conserved residues that are essential for binding the metal cofactor and hence for dihydropyrimidinase activity. Its enzyme activity is therefore unsure.</text>
</comment>
<keyword id="KW-0963">Cytoplasm</keyword>
<keyword id="KW-0488">Methylation</keyword>
<keyword id="KW-0597">Phosphoprotein</keyword>
<keyword id="KW-1185">Reference proteome</keyword>
<name>DPYL5_MOUSE</name>
<proteinExistence type="evidence at protein level"/>
<dbReference type="EMBL" id="AF249295">
    <property type="protein sequence ID" value="AAG37998.1"/>
    <property type="molecule type" value="mRNA"/>
</dbReference>
<dbReference type="EMBL" id="BC065054">
    <property type="protein sequence ID" value="AAH65054.1"/>
    <property type="molecule type" value="mRNA"/>
</dbReference>
<dbReference type="CCDS" id="CCDS39047.1"/>
<dbReference type="RefSeq" id="NP_001343877.1">
    <property type="nucleotide sequence ID" value="NM_001356948.1"/>
</dbReference>
<dbReference type="RefSeq" id="NP_075534.1">
    <property type="nucleotide sequence ID" value="NM_023047.3"/>
</dbReference>
<dbReference type="RefSeq" id="XP_006504108.1">
    <property type="nucleotide sequence ID" value="XM_006504045.1"/>
</dbReference>
<dbReference type="SMR" id="Q9EQF6"/>
<dbReference type="BioGRID" id="211143">
    <property type="interactions" value="9"/>
</dbReference>
<dbReference type="FunCoup" id="Q9EQF6">
    <property type="interactions" value="297"/>
</dbReference>
<dbReference type="IntAct" id="Q9EQF6">
    <property type="interactions" value="3"/>
</dbReference>
<dbReference type="MINT" id="Q9EQF6"/>
<dbReference type="STRING" id="10090.ENSMUSP00000110377"/>
<dbReference type="MEROPS" id="M38.978"/>
<dbReference type="GlyGen" id="Q9EQF6">
    <property type="glycosylation" value="2 sites, 1 O-linked glycan (2 sites)"/>
</dbReference>
<dbReference type="iPTMnet" id="Q9EQF6"/>
<dbReference type="PhosphoSitePlus" id="Q9EQF6"/>
<dbReference type="SwissPalm" id="Q9EQF6"/>
<dbReference type="PaxDb" id="10090-ENSMUSP00000085400"/>
<dbReference type="PeptideAtlas" id="Q9EQF6"/>
<dbReference type="ProteomicsDB" id="277400"/>
<dbReference type="Antibodypedia" id="28026">
    <property type="antibodies" value="234 antibodies from 28 providers"/>
</dbReference>
<dbReference type="DNASU" id="65254"/>
<dbReference type="Ensembl" id="ENSMUST00000088081.11">
    <property type="protein sequence ID" value="ENSMUSP00000085400.5"/>
    <property type="gene ID" value="ENSMUSG00000029168.15"/>
</dbReference>
<dbReference type="Ensembl" id="ENSMUST00000114729.8">
    <property type="protein sequence ID" value="ENSMUSP00000110377.2"/>
    <property type="gene ID" value="ENSMUSG00000029168.15"/>
</dbReference>
<dbReference type="GeneID" id="65254"/>
<dbReference type="KEGG" id="mmu:65254"/>
<dbReference type="UCSC" id="uc008wvw.1">
    <property type="organism name" value="mouse"/>
</dbReference>
<dbReference type="AGR" id="MGI:1929772"/>
<dbReference type="CTD" id="56896"/>
<dbReference type="MGI" id="MGI:1929772">
    <property type="gene designation" value="Dpysl5"/>
</dbReference>
<dbReference type="VEuPathDB" id="HostDB:ENSMUSG00000029168"/>
<dbReference type="eggNOG" id="KOG2584">
    <property type="taxonomic scope" value="Eukaryota"/>
</dbReference>
<dbReference type="GeneTree" id="ENSGT01030000234527"/>
<dbReference type="HOGENOM" id="CLU_015572_2_2_1"/>
<dbReference type="InParanoid" id="Q9EQF6"/>
<dbReference type="OMA" id="CEHTPSI"/>
<dbReference type="OrthoDB" id="1924787at2759"/>
<dbReference type="PhylomeDB" id="Q9EQF6"/>
<dbReference type="TreeFam" id="TF314706"/>
<dbReference type="Reactome" id="R-MMU-399956">
    <property type="pathway name" value="CRMPs in Sema3A signaling"/>
</dbReference>
<dbReference type="BioGRID-ORCS" id="65254">
    <property type="hits" value="6 hits in 77 CRISPR screens"/>
</dbReference>
<dbReference type="ChiTaRS" id="Dpysl5">
    <property type="organism name" value="mouse"/>
</dbReference>
<dbReference type="PRO" id="PR:Q9EQF6"/>
<dbReference type="Proteomes" id="UP000000589">
    <property type="component" value="Chromosome 5"/>
</dbReference>
<dbReference type="RNAct" id="Q9EQF6">
    <property type="molecule type" value="protein"/>
</dbReference>
<dbReference type="Bgee" id="ENSMUSG00000029168">
    <property type="expression patterns" value="Expressed in cortical plate and 131 other cell types or tissues"/>
</dbReference>
<dbReference type="ExpressionAtlas" id="Q9EQF6">
    <property type="expression patterns" value="baseline and differential"/>
</dbReference>
<dbReference type="GO" id="GO:0005737">
    <property type="term" value="C:cytoplasm"/>
    <property type="evidence" value="ECO:0000353"/>
    <property type="project" value="MGI"/>
</dbReference>
<dbReference type="GO" id="GO:0030425">
    <property type="term" value="C:dendrite"/>
    <property type="evidence" value="ECO:0000314"/>
    <property type="project" value="MGI"/>
</dbReference>
<dbReference type="GO" id="GO:0098978">
    <property type="term" value="C:glutamatergic synapse"/>
    <property type="evidence" value="ECO:0000314"/>
    <property type="project" value="SynGO"/>
</dbReference>
<dbReference type="GO" id="GO:0043025">
    <property type="term" value="C:neuronal cell body"/>
    <property type="evidence" value="ECO:0000314"/>
    <property type="project" value="MGI"/>
</dbReference>
<dbReference type="GO" id="GO:0032991">
    <property type="term" value="C:protein-containing complex"/>
    <property type="evidence" value="ECO:0007669"/>
    <property type="project" value="Ensembl"/>
</dbReference>
<dbReference type="GO" id="GO:0045202">
    <property type="term" value="C:synapse"/>
    <property type="evidence" value="ECO:0000314"/>
    <property type="project" value="SynGO"/>
</dbReference>
<dbReference type="GO" id="GO:0016810">
    <property type="term" value="F:hydrolase activity, acting on carbon-nitrogen (but not peptide) bonds"/>
    <property type="evidence" value="ECO:0007669"/>
    <property type="project" value="InterPro"/>
</dbReference>
<dbReference type="GO" id="GO:0007411">
    <property type="term" value="P:axon guidance"/>
    <property type="evidence" value="ECO:0000304"/>
    <property type="project" value="MGI"/>
</dbReference>
<dbReference type="GO" id="GO:0050774">
    <property type="term" value="P:negative regulation of dendrite morphogenesis"/>
    <property type="evidence" value="ECO:0007669"/>
    <property type="project" value="Ensembl"/>
</dbReference>
<dbReference type="CDD" id="cd01314">
    <property type="entry name" value="D-HYD"/>
    <property type="match status" value="1"/>
</dbReference>
<dbReference type="FunFam" id="3.20.20.140:FF:000076">
    <property type="entry name" value="Dihydropyrimidinase like 2"/>
    <property type="match status" value="1"/>
</dbReference>
<dbReference type="FunFam" id="2.30.40.10:FF:000029">
    <property type="entry name" value="Dihydropyrimidinase-related protein 5"/>
    <property type="match status" value="1"/>
</dbReference>
<dbReference type="Gene3D" id="3.20.20.140">
    <property type="entry name" value="Metal-dependent hydrolases"/>
    <property type="match status" value="1"/>
</dbReference>
<dbReference type="Gene3D" id="2.30.40.10">
    <property type="entry name" value="Urease, subunit C, domain 1"/>
    <property type="match status" value="1"/>
</dbReference>
<dbReference type="InterPro" id="IPR006680">
    <property type="entry name" value="Amidohydro-rel"/>
</dbReference>
<dbReference type="InterPro" id="IPR011778">
    <property type="entry name" value="Hydantoinase/dihydroPyrase"/>
</dbReference>
<dbReference type="InterPro" id="IPR011059">
    <property type="entry name" value="Metal-dep_hydrolase_composite"/>
</dbReference>
<dbReference type="InterPro" id="IPR032466">
    <property type="entry name" value="Metal_Hydrolase"/>
</dbReference>
<dbReference type="InterPro" id="IPR050378">
    <property type="entry name" value="Metallo-dep_Hydrolases_sf"/>
</dbReference>
<dbReference type="NCBIfam" id="TIGR02033">
    <property type="entry name" value="D-hydantoinase"/>
    <property type="match status" value="1"/>
</dbReference>
<dbReference type="PANTHER" id="PTHR11647:SF58">
    <property type="entry name" value="DIHYDROPYRIMIDINASE-RELATED PROTEIN 5"/>
    <property type="match status" value="1"/>
</dbReference>
<dbReference type="PANTHER" id="PTHR11647">
    <property type="entry name" value="HYDRANTOINASE/DIHYDROPYRIMIDINASE FAMILY MEMBER"/>
    <property type="match status" value="1"/>
</dbReference>
<dbReference type="Pfam" id="PF01979">
    <property type="entry name" value="Amidohydro_1"/>
    <property type="match status" value="1"/>
</dbReference>
<dbReference type="SUPFAM" id="SSF51338">
    <property type="entry name" value="Composite domain of metallo-dependent hydrolases"/>
    <property type="match status" value="2"/>
</dbReference>
<dbReference type="SUPFAM" id="SSF51556">
    <property type="entry name" value="Metallo-dependent hydrolases"/>
    <property type="match status" value="1"/>
</dbReference>
<accession>Q9EQF6</accession>
<gene>
    <name type="primary">Dpysl5</name>
    <name type="synonym">Crmp5</name>
</gene>
<reference key="1">
    <citation type="journal article" date="2000" name="J. Biol. Chem.">
        <title>Molecular characterization of CRMP5, a novel member of the collapsin response mediator protein family.</title>
        <authorList>
            <person name="Fukada M."/>
            <person name="Watakabe I."/>
            <person name="Yuasa-Kawada J."/>
            <person name="Kawachi H."/>
            <person name="Kuroiwa A."/>
            <person name="Matsuda Y."/>
            <person name="Noda M."/>
        </authorList>
    </citation>
    <scope>NUCLEOTIDE SEQUENCE [MRNA]</scope>
    <scope>TISSUE SPECIFICITY</scope>
    <scope>DEVELOPMENTAL STAGE</scope>
    <scope>SUBUNIT</scope>
    <source>
        <strain>Swiss Webster / NIH</strain>
        <tissue>Embryo</tissue>
    </source>
</reference>
<reference key="2">
    <citation type="journal article" date="2004" name="Genome Res.">
        <title>The status, quality, and expansion of the NIH full-length cDNA project: the Mammalian Gene Collection (MGC).</title>
        <authorList>
            <consortium name="The MGC Project Team"/>
        </authorList>
    </citation>
    <scope>NUCLEOTIDE SEQUENCE [LARGE SCALE MRNA]</scope>
    <source>
        <strain>C57BL/6J</strain>
        <tissue>Brain</tissue>
    </source>
</reference>
<reference key="3">
    <citation type="journal article" date="2003" name="Genes Cells">
        <title>Isolation and expression of a novel mitochondrial septin that interacts with CRMP/CRAM in the developing neurones.</title>
        <authorList>
            <person name="Takahashi S."/>
            <person name="Inatome R."/>
            <person name="Yamamura H."/>
            <person name="Yanagi S."/>
        </authorList>
    </citation>
    <scope>INTERACTION WITH SEPTIN4</scope>
    <scope>SUBCELLULAR LOCATION</scope>
</reference>
<reference key="4">
    <citation type="journal article" date="2010" name="Cell">
        <title>A tissue-specific atlas of mouse protein phosphorylation and expression.</title>
        <authorList>
            <person name="Huttlin E.L."/>
            <person name="Jedrychowski M.P."/>
            <person name="Elias J.E."/>
            <person name="Goswami T."/>
            <person name="Rad R."/>
            <person name="Beausoleil S.A."/>
            <person name="Villen J."/>
            <person name="Haas W."/>
            <person name="Sowa M.E."/>
            <person name="Gygi S.P."/>
        </authorList>
    </citation>
    <scope>PHOSPHORYLATION [LARGE SCALE ANALYSIS] AT THR-509; THR-514; SER-532 AND SER-538</scope>
    <scope>IDENTIFICATION BY MASS SPECTROMETRY [LARGE SCALE ANALYSIS]</scope>
    <source>
        <tissue>Brain</tissue>
        <tissue>Liver</tissue>
        <tissue>Lung</tissue>
        <tissue>Testis</tissue>
    </source>
</reference>
<reference key="5">
    <citation type="journal article" date="2014" name="Mol. Cell. Proteomics">
        <title>Immunoaffinity enrichment and mass spectrometry analysis of protein methylation.</title>
        <authorList>
            <person name="Guo A."/>
            <person name="Gu H."/>
            <person name="Zhou J."/>
            <person name="Mulhern D."/>
            <person name="Wang Y."/>
            <person name="Lee K.A."/>
            <person name="Yang V."/>
            <person name="Aguiar M."/>
            <person name="Kornhauser J."/>
            <person name="Jia X."/>
            <person name="Ren J."/>
            <person name="Beausoleil S.A."/>
            <person name="Silva J.C."/>
            <person name="Vemulapalli V."/>
            <person name="Bedford M.T."/>
            <person name="Comb M.J."/>
        </authorList>
    </citation>
    <scope>METHYLATION [LARGE SCALE ANALYSIS] AT ARG-559</scope>
    <scope>IDENTIFICATION BY MASS SPECTROMETRY [LARGE SCALE ANALYSIS]</scope>
    <source>
        <tissue>Brain</tissue>
    </source>
</reference>
<sequence length="564" mass="61516">MLANSASVRILIKGGKVVNDDCTHEADVYIESGIIQQVGRELMIPGGAKVIDATGKLVIPGGIDTSTHFHQTFMNATCVDDFYHGTKAALVGGTTMIIGHVLPDKETSLVEAYEKCRALADPKVCCDYALHVGITWWAPKVKAEMETLVREKGVNSFQMFMTYKDLYMLRDSELYQVFHACRDIGAIPRVHAENGELVAEGAKEALDLGITGPEGIEISHPEELEAEATHRVITIANRTHCPIYLVNVSSISAGDVIAAAKMQGKVVLAETTNAHATLTGLHYYHQDWSHAAAYVTVPPLRLDTNTSTYLMSLLANDTLNIVASDHRPFTTKQKAMGKEDFTKIPHGVSGVQDRMSVVWERGVVGGKMDENRFVAVTSSNAAKILNLYPRKGRIIPGADADVVVWDPEATKTISASTQVQGGDFNLYENMRCHGVPLVTISRGRVVYENGVFMCAEGTGKFCPLRSFPDIVYKKLVQREKTLKVRGVDRTPYLGDVAIVVHPGKKEMGTPLADTPTRPVTRHGGMRDLHESSFSLSGSQIDDHVPKRASARILAPPGGRSSGIW</sequence>